<feature type="chain" id="PRO_0000238091" description="33 kDa chaperonin">
    <location>
        <begin position="1"/>
        <end position="292"/>
    </location>
</feature>
<feature type="disulfide bond" description="Redox-active" evidence="1">
    <location>
        <begin position="230"/>
        <end position="232"/>
    </location>
</feature>
<feature type="disulfide bond" description="Redox-active" evidence="1">
    <location>
        <begin position="263"/>
        <end position="266"/>
    </location>
</feature>
<gene>
    <name evidence="1" type="primary">hslO</name>
    <name type="ordered locus">SSON_3532</name>
</gene>
<reference key="1">
    <citation type="journal article" date="2005" name="Nucleic Acids Res.">
        <title>Genome dynamics and diversity of Shigella species, the etiologic agents of bacillary dysentery.</title>
        <authorList>
            <person name="Yang F."/>
            <person name="Yang J."/>
            <person name="Zhang X."/>
            <person name="Chen L."/>
            <person name="Jiang Y."/>
            <person name="Yan Y."/>
            <person name="Tang X."/>
            <person name="Wang J."/>
            <person name="Xiong Z."/>
            <person name="Dong J."/>
            <person name="Xue Y."/>
            <person name="Zhu Y."/>
            <person name="Xu X."/>
            <person name="Sun L."/>
            <person name="Chen S."/>
            <person name="Nie H."/>
            <person name="Peng J."/>
            <person name="Xu J."/>
            <person name="Wang Y."/>
            <person name="Yuan Z."/>
            <person name="Wen Y."/>
            <person name="Yao Z."/>
            <person name="Shen Y."/>
            <person name="Qiang B."/>
            <person name="Hou Y."/>
            <person name="Yu J."/>
            <person name="Jin Q."/>
        </authorList>
    </citation>
    <scope>NUCLEOTIDE SEQUENCE [LARGE SCALE GENOMIC DNA]</scope>
    <source>
        <strain>Ss046</strain>
    </source>
</reference>
<organism>
    <name type="scientific">Shigella sonnei (strain Ss046)</name>
    <dbReference type="NCBI Taxonomy" id="300269"/>
    <lineage>
        <taxon>Bacteria</taxon>
        <taxon>Pseudomonadati</taxon>
        <taxon>Pseudomonadota</taxon>
        <taxon>Gammaproteobacteria</taxon>
        <taxon>Enterobacterales</taxon>
        <taxon>Enterobacteriaceae</taxon>
        <taxon>Shigella</taxon>
    </lineage>
</organism>
<sequence length="292" mass="32534">MPQHDQLHRYLFENFAVRGELVTVSETLQQILENHDYPQPVKNVLAELLVATSLLTATLKFDGDITVQLQGDGPMNLAVINGNNNQQMRGVARVQGEIPENADLKTLVGNGYVVITITPSEGERYQGVVGLEGDTLAACLEDYFMRSEQLPTRLFIRTGDVDGKPAAGGMLLQVMPAQNAQQDDFDHLATLTETIKTEELLTLPANEVLWRLYHEEEVTVYDPQDVEFKCTCSRERCADALKTLPDEEVDSILAEDGEIDMHCDYCGNHYLFNAMDIAEIRNNASPADPQVH</sequence>
<evidence type="ECO:0000255" key="1">
    <source>
        <dbReference type="HAMAP-Rule" id="MF_00117"/>
    </source>
</evidence>
<evidence type="ECO:0000305" key="2"/>
<comment type="function">
    <text evidence="1">Redox regulated molecular chaperone. Protects both thermally unfolding and oxidatively damaged proteins from irreversible aggregation. Plays an important role in the bacterial defense system toward oxidative stress.</text>
</comment>
<comment type="subcellular location">
    <subcellularLocation>
        <location evidence="1">Cytoplasm</location>
    </subcellularLocation>
</comment>
<comment type="PTM">
    <text evidence="1">Under oxidizing conditions two disulfide bonds are formed involving the reactive cysteines. Under reducing conditions zinc is bound to the reactive cysteines and the protein is inactive.</text>
</comment>
<comment type="similarity">
    <text evidence="1">Belongs to the HSP33 family.</text>
</comment>
<comment type="sequence caution" evidence="2">
    <conflict type="erroneous initiation">
        <sequence resource="EMBL-CDS" id="AAZ90089"/>
    </conflict>
</comment>
<proteinExistence type="inferred from homology"/>
<name>HSLO_SHISS</name>
<accession>Q3YWM3</accession>
<keyword id="KW-0143">Chaperone</keyword>
<keyword id="KW-0963">Cytoplasm</keyword>
<keyword id="KW-1015">Disulfide bond</keyword>
<keyword id="KW-0676">Redox-active center</keyword>
<keyword id="KW-1185">Reference proteome</keyword>
<keyword id="KW-0862">Zinc</keyword>
<dbReference type="EMBL" id="CP000038">
    <property type="protein sequence ID" value="AAZ90089.1"/>
    <property type="status" value="ALT_INIT"/>
    <property type="molecule type" value="Genomic_DNA"/>
</dbReference>
<dbReference type="RefSeq" id="WP_001135574.1">
    <property type="nucleotide sequence ID" value="NC_007384.1"/>
</dbReference>
<dbReference type="SMR" id="Q3YWM3"/>
<dbReference type="GeneID" id="93778597"/>
<dbReference type="KEGG" id="ssn:SSON_3532"/>
<dbReference type="HOGENOM" id="CLU_054493_0_0_6"/>
<dbReference type="Proteomes" id="UP000002529">
    <property type="component" value="Chromosome"/>
</dbReference>
<dbReference type="GO" id="GO:0005737">
    <property type="term" value="C:cytoplasm"/>
    <property type="evidence" value="ECO:0007669"/>
    <property type="project" value="UniProtKB-SubCell"/>
</dbReference>
<dbReference type="GO" id="GO:0044183">
    <property type="term" value="F:protein folding chaperone"/>
    <property type="evidence" value="ECO:0007669"/>
    <property type="project" value="TreeGrafter"/>
</dbReference>
<dbReference type="GO" id="GO:0051082">
    <property type="term" value="F:unfolded protein binding"/>
    <property type="evidence" value="ECO:0007669"/>
    <property type="project" value="UniProtKB-UniRule"/>
</dbReference>
<dbReference type="GO" id="GO:0042026">
    <property type="term" value="P:protein refolding"/>
    <property type="evidence" value="ECO:0007669"/>
    <property type="project" value="TreeGrafter"/>
</dbReference>
<dbReference type="CDD" id="cd00498">
    <property type="entry name" value="Hsp33"/>
    <property type="match status" value="1"/>
</dbReference>
<dbReference type="FunFam" id="3.55.30.10:FF:000001">
    <property type="entry name" value="33 kDa chaperonin"/>
    <property type="match status" value="1"/>
</dbReference>
<dbReference type="Gene3D" id="1.10.287.480">
    <property type="entry name" value="helix hairpin bin"/>
    <property type="match status" value="1"/>
</dbReference>
<dbReference type="Gene3D" id="3.55.30.10">
    <property type="entry name" value="Hsp33 domain"/>
    <property type="match status" value="1"/>
</dbReference>
<dbReference type="Gene3D" id="3.90.1280.10">
    <property type="entry name" value="HSP33 redox switch-like"/>
    <property type="match status" value="1"/>
</dbReference>
<dbReference type="HAMAP" id="MF_00117">
    <property type="entry name" value="HslO"/>
    <property type="match status" value="1"/>
</dbReference>
<dbReference type="InterPro" id="IPR000397">
    <property type="entry name" value="Heat_shock_Hsp33"/>
</dbReference>
<dbReference type="InterPro" id="IPR016154">
    <property type="entry name" value="Heat_shock_Hsp33_C"/>
</dbReference>
<dbReference type="InterPro" id="IPR016153">
    <property type="entry name" value="Heat_shock_Hsp33_N"/>
</dbReference>
<dbReference type="InterPro" id="IPR023212">
    <property type="entry name" value="Hsp33_helix_hairpin_bin_dom_sf"/>
</dbReference>
<dbReference type="NCBIfam" id="NF001033">
    <property type="entry name" value="PRK00114.1"/>
    <property type="match status" value="1"/>
</dbReference>
<dbReference type="PANTHER" id="PTHR30111">
    <property type="entry name" value="33 KDA CHAPERONIN"/>
    <property type="match status" value="1"/>
</dbReference>
<dbReference type="PANTHER" id="PTHR30111:SF1">
    <property type="entry name" value="33 KDA CHAPERONIN"/>
    <property type="match status" value="1"/>
</dbReference>
<dbReference type="Pfam" id="PF01430">
    <property type="entry name" value="HSP33"/>
    <property type="match status" value="1"/>
</dbReference>
<dbReference type="PIRSF" id="PIRSF005261">
    <property type="entry name" value="Heat_shock_Hsp33"/>
    <property type="match status" value="1"/>
</dbReference>
<dbReference type="SUPFAM" id="SSF64397">
    <property type="entry name" value="Hsp33 domain"/>
    <property type="match status" value="1"/>
</dbReference>
<dbReference type="SUPFAM" id="SSF118352">
    <property type="entry name" value="HSP33 redox switch-like"/>
    <property type="match status" value="1"/>
</dbReference>
<protein>
    <recommendedName>
        <fullName evidence="1">33 kDa chaperonin</fullName>
    </recommendedName>
    <alternativeName>
        <fullName evidence="1">Heat shock protein 33 homolog</fullName>
        <shortName evidence="1">HSP33</shortName>
    </alternativeName>
</protein>